<reference key="1">
    <citation type="submission" date="2006-09" db="EMBL/GenBank/DDBJ databases">
        <title>Complete sequence of chromosome 1 of Shewanella sp. ANA-3.</title>
        <authorList>
            <person name="Copeland A."/>
            <person name="Lucas S."/>
            <person name="Lapidus A."/>
            <person name="Barry K."/>
            <person name="Detter J.C."/>
            <person name="Glavina del Rio T."/>
            <person name="Hammon N."/>
            <person name="Israni S."/>
            <person name="Dalin E."/>
            <person name="Tice H."/>
            <person name="Pitluck S."/>
            <person name="Chertkov O."/>
            <person name="Brettin T."/>
            <person name="Bruce D."/>
            <person name="Han C."/>
            <person name="Tapia R."/>
            <person name="Gilna P."/>
            <person name="Schmutz J."/>
            <person name="Larimer F."/>
            <person name="Land M."/>
            <person name="Hauser L."/>
            <person name="Kyrpides N."/>
            <person name="Kim E."/>
            <person name="Newman D."/>
            <person name="Salticov C."/>
            <person name="Konstantinidis K."/>
            <person name="Klappenback J."/>
            <person name="Tiedje J."/>
            <person name="Richardson P."/>
        </authorList>
    </citation>
    <scope>NUCLEOTIDE SEQUENCE [LARGE SCALE GENOMIC DNA]</scope>
    <source>
        <strain>ANA-3</strain>
    </source>
</reference>
<sequence>MSKKSQLVFAMVAGELSGDILGAGLMAALQKTHPNARFVGIGGPRMEALGFESLFAMEELAVMGIVEVLSRLPRLLHVRSSLIKSITELKPDCFIGIDAPDFNIGLELKLKAQGIKTVHYVSPSVWAWRPKRIFKIAKATNMVLSLLPFEKAFYDKHQVPCTFVGHTLADDIPLESDKASARQLLELDPEAEYLAILPGSRGGELKQLAEPFVKAALLIKQQFPDIRFVTPLVNQKRREQFEQALKAHAPDLEIHMVEGKSREVMAAADGILLASGTATLEAMLIKRPMVVAYRVSPLTYQIAKTMMQVNRFSLPNLLAGRDVVPELIQHDCTPEKIAEAVGVELNRDFTPIKAEFERLHQMLRCDASQKAAEAVLALVDAKDVN</sequence>
<feature type="chain" id="PRO_1000049418" description="Lipid-A-disaccharide synthase">
    <location>
        <begin position="1"/>
        <end position="385"/>
    </location>
</feature>
<proteinExistence type="inferred from homology"/>
<dbReference type="EC" id="2.4.1.182" evidence="1"/>
<dbReference type="EMBL" id="CP000469">
    <property type="protein sequence ID" value="ABK49029.1"/>
    <property type="molecule type" value="Genomic_DNA"/>
</dbReference>
<dbReference type="RefSeq" id="WP_011717681.1">
    <property type="nucleotide sequence ID" value="NC_008577.1"/>
</dbReference>
<dbReference type="SMR" id="A0KZ10"/>
<dbReference type="STRING" id="94122.Shewana3_2802"/>
<dbReference type="CAZy" id="GT19">
    <property type="family name" value="Glycosyltransferase Family 19"/>
</dbReference>
<dbReference type="KEGG" id="shn:Shewana3_2802"/>
<dbReference type="eggNOG" id="COG0763">
    <property type="taxonomic scope" value="Bacteria"/>
</dbReference>
<dbReference type="HOGENOM" id="CLU_036577_3_0_6"/>
<dbReference type="OrthoDB" id="9801642at2"/>
<dbReference type="UniPathway" id="UPA00973"/>
<dbReference type="Proteomes" id="UP000002589">
    <property type="component" value="Chromosome"/>
</dbReference>
<dbReference type="GO" id="GO:0016020">
    <property type="term" value="C:membrane"/>
    <property type="evidence" value="ECO:0007669"/>
    <property type="project" value="GOC"/>
</dbReference>
<dbReference type="GO" id="GO:0008915">
    <property type="term" value="F:lipid-A-disaccharide synthase activity"/>
    <property type="evidence" value="ECO:0007669"/>
    <property type="project" value="UniProtKB-UniRule"/>
</dbReference>
<dbReference type="GO" id="GO:0005543">
    <property type="term" value="F:phospholipid binding"/>
    <property type="evidence" value="ECO:0007669"/>
    <property type="project" value="TreeGrafter"/>
</dbReference>
<dbReference type="GO" id="GO:0009245">
    <property type="term" value="P:lipid A biosynthetic process"/>
    <property type="evidence" value="ECO:0007669"/>
    <property type="project" value="UniProtKB-UniRule"/>
</dbReference>
<dbReference type="CDD" id="cd01635">
    <property type="entry name" value="Glycosyltransferase_GTB-type"/>
    <property type="match status" value="1"/>
</dbReference>
<dbReference type="HAMAP" id="MF_00392">
    <property type="entry name" value="LpxB"/>
    <property type="match status" value="1"/>
</dbReference>
<dbReference type="InterPro" id="IPR003835">
    <property type="entry name" value="Glyco_trans_19"/>
</dbReference>
<dbReference type="NCBIfam" id="TIGR00215">
    <property type="entry name" value="lpxB"/>
    <property type="match status" value="1"/>
</dbReference>
<dbReference type="PANTHER" id="PTHR30372">
    <property type="entry name" value="LIPID-A-DISACCHARIDE SYNTHASE"/>
    <property type="match status" value="1"/>
</dbReference>
<dbReference type="PANTHER" id="PTHR30372:SF4">
    <property type="entry name" value="LIPID-A-DISACCHARIDE SYNTHASE, MITOCHONDRIAL-RELATED"/>
    <property type="match status" value="1"/>
</dbReference>
<dbReference type="Pfam" id="PF02684">
    <property type="entry name" value="LpxB"/>
    <property type="match status" value="1"/>
</dbReference>
<dbReference type="SUPFAM" id="SSF53756">
    <property type="entry name" value="UDP-Glycosyltransferase/glycogen phosphorylase"/>
    <property type="match status" value="1"/>
</dbReference>
<organism>
    <name type="scientific">Shewanella sp. (strain ANA-3)</name>
    <dbReference type="NCBI Taxonomy" id="94122"/>
    <lineage>
        <taxon>Bacteria</taxon>
        <taxon>Pseudomonadati</taxon>
        <taxon>Pseudomonadota</taxon>
        <taxon>Gammaproteobacteria</taxon>
        <taxon>Alteromonadales</taxon>
        <taxon>Shewanellaceae</taxon>
        <taxon>Shewanella</taxon>
    </lineage>
</organism>
<evidence type="ECO:0000255" key="1">
    <source>
        <dbReference type="HAMAP-Rule" id="MF_00392"/>
    </source>
</evidence>
<accession>A0KZ10</accession>
<name>LPXB_SHESA</name>
<gene>
    <name evidence="1" type="primary">lpxB</name>
    <name type="ordered locus">Shewana3_2802</name>
</gene>
<keyword id="KW-0328">Glycosyltransferase</keyword>
<keyword id="KW-0441">Lipid A biosynthesis</keyword>
<keyword id="KW-0444">Lipid biosynthesis</keyword>
<keyword id="KW-0443">Lipid metabolism</keyword>
<keyword id="KW-0808">Transferase</keyword>
<comment type="function">
    <text evidence="1">Condensation of UDP-2,3-diacylglucosamine and 2,3-diacylglucosamine-1-phosphate to form lipid A disaccharide, a precursor of lipid A, a phosphorylated glycolipid that anchors the lipopolysaccharide to the outer membrane of the cell.</text>
</comment>
<comment type="catalytic activity">
    <reaction evidence="1">
        <text>a lipid X + a UDP-2-N,3-O-bis[(3R)-3-hydroxyacyl]-alpha-D-glucosamine = a lipid A disaccharide + UDP + H(+)</text>
        <dbReference type="Rhea" id="RHEA:67828"/>
        <dbReference type="ChEBI" id="CHEBI:15378"/>
        <dbReference type="ChEBI" id="CHEBI:58223"/>
        <dbReference type="ChEBI" id="CHEBI:137748"/>
        <dbReference type="ChEBI" id="CHEBI:176338"/>
        <dbReference type="ChEBI" id="CHEBI:176343"/>
        <dbReference type="EC" id="2.4.1.182"/>
    </reaction>
</comment>
<comment type="pathway">
    <text evidence="1">Bacterial outer membrane biogenesis; LPS lipid A biosynthesis.</text>
</comment>
<comment type="similarity">
    <text evidence="1">Belongs to the LpxB family.</text>
</comment>
<protein>
    <recommendedName>
        <fullName evidence="1">Lipid-A-disaccharide synthase</fullName>
        <ecNumber evidence="1">2.4.1.182</ecNumber>
    </recommendedName>
</protein>